<name>CCMA_PSESM</name>
<reference key="1">
    <citation type="journal article" date="2003" name="Proc. Natl. Acad. Sci. U.S.A.">
        <title>The complete genome sequence of the Arabidopsis and tomato pathogen Pseudomonas syringae pv. tomato DC3000.</title>
        <authorList>
            <person name="Buell C.R."/>
            <person name="Joardar V."/>
            <person name="Lindeberg M."/>
            <person name="Selengut J."/>
            <person name="Paulsen I.T."/>
            <person name="Gwinn M.L."/>
            <person name="Dodson R.J."/>
            <person name="DeBoy R.T."/>
            <person name="Durkin A.S."/>
            <person name="Kolonay J.F."/>
            <person name="Madupu R."/>
            <person name="Daugherty S.C."/>
            <person name="Brinkac L.M."/>
            <person name="Beanan M.J."/>
            <person name="Haft D.H."/>
            <person name="Nelson W.C."/>
            <person name="Davidsen T.M."/>
            <person name="Zafar N."/>
            <person name="Zhou L."/>
            <person name="Liu J."/>
            <person name="Yuan Q."/>
            <person name="Khouri H.M."/>
            <person name="Fedorova N.B."/>
            <person name="Tran B."/>
            <person name="Russell D."/>
            <person name="Berry K.J."/>
            <person name="Utterback T.R."/>
            <person name="Van Aken S.E."/>
            <person name="Feldblyum T.V."/>
            <person name="D'Ascenzo M."/>
            <person name="Deng W.-L."/>
            <person name="Ramos A.R."/>
            <person name="Alfano J.R."/>
            <person name="Cartinhour S."/>
            <person name="Chatterjee A.K."/>
            <person name="Delaney T.P."/>
            <person name="Lazarowitz S.G."/>
            <person name="Martin G.B."/>
            <person name="Schneider D.J."/>
            <person name="Tang X."/>
            <person name="Bender C.L."/>
            <person name="White O."/>
            <person name="Fraser C.M."/>
            <person name="Collmer A."/>
        </authorList>
    </citation>
    <scope>NUCLEOTIDE SEQUENCE [LARGE SCALE GENOMIC DNA]</scope>
    <source>
        <strain>ATCC BAA-871 / DC3000</strain>
    </source>
</reference>
<evidence type="ECO:0000255" key="1">
    <source>
        <dbReference type="HAMAP-Rule" id="MF_01707"/>
    </source>
</evidence>
<feature type="chain" id="PRO_0000092199" description="Cytochrome c biogenesis ATP-binding export protein CcmA">
    <location>
        <begin position="1"/>
        <end position="212"/>
    </location>
</feature>
<feature type="domain" description="ABC transporter" evidence="1">
    <location>
        <begin position="8"/>
        <end position="212"/>
    </location>
</feature>
<feature type="binding site" evidence="1">
    <location>
        <begin position="40"/>
        <end position="47"/>
    </location>
    <ligand>
        <name>ATP</name>
        <dbReference type="ChEBI" id="CHEBI:30616"/>
    </ligand>
</feature>
<proteinExistence type="inferred from homology"/>
<sequence>MTPAPPFLQATALACERDWRVLFENLDLHLCAGDMLQVSGPNGSGKTSLLRLLCGLMQPTAGQVLLNGQVLGRQRAPGCDLLWLGHAPALKDLLTPLENLAWLCALHQPAGADAIGHALNAVGLAGFEDVPCHTLSAGQQRRVALARLHLPGPSLWILDEPFTALDQQGIAQLENHLADHCEQGGMVVITTHHTLSRLPAGYRSIDLAKGSA</sequence>
<gene>
    <name evidence="1" type="primary">ccmA</name>
    <name type="ordered locus">PSPTO_3635</name>
</gene>
<organism>
    <name type="scientific">Pseudomonas syringae pv. tomato (strain ATCC BAA-871 / DC3000)</name>
    <dbReference type="NCBI Taxonomy" id="223283"/>
    <lineage>
        <taxon>Bacteria</taxon>
        <taxon>Pseudomonadati</taxon>
        <taxon>Pseudomonadota</taxon>
        <taxon>Gammaproteobacteria</taxon>
        <taxon>Pseudomonadales</taxon>
        <taxon>Pseudomonadaceae</taxon>
        <taxon>Pseudomonas</taxon>
    </lineage>
</organism>
<keyword id="KW-0067">ATP-binding</keyword>
<keyword id="KW-0997">Cell inner membrane</keyword>
<keyword id="KW-1003">Cell membrane</keyword>
<keyword id="KW-0201">Cytochrome c-type biogenesis</keyword>
<keyword id="KW-0472">Membrane</keyword>
<keyword id="KW-0547">Nucleotide-binding</keyword>
<keyword id="KW-1185">Reference proteome</keyword>
<keyword id="KW-1278">Translocase</keyword>
<keyword id="KW-0813">Transport</keyword>
<protein>
    <recommendedName>
        <fullName evidence="1">Cytochrome c biogenesis ATP-binding export protein CcmA</fullName>
        <ecNumber evidence="1">7.6.2.5</ecNumber>
    </recommendedName>
    <alternativeName>
        <fullName evidence="1">Heme exporter protein A</fullName>
    </alternativeName>
</protein>
<dbReference type="EC" id="7.6.2.5" evidence="1"/>
<dbReference type="EMBL" id="AE016853">
    <property type="protein sequence ID" value="AAO57106.1"/>
    <property type="molecule type" value="Genomic_DNA"/>
</dbReference>
<dbReference type="RefSeq" id="NP_793411.1">
    <property type="nucleotide sequence ID" value="NC_004578.1"/>
</dbReference>
<dbReference type="RefSeq" id="WP_007245274.1">
    <property type="nucleotide sequence ID" value="NC_004578.1"/>
</dbReference>
<dbReference type="SMR" id="Q87Z03"/>
<dbReference type="STRING" id="223283.PSPTO_3635"/>
<dbReference type="GeneID" id="1185300"/>
<dbReference type="KEGG" id="pst:PSPTO_3635"/>
<dbReference type="PATRIC" id="fig|223283.9.peg.3723"/>
<dbReference type="eggNOG" id="COG4133">
    <property type="taxonomic scope" value="Bacteria"/>
</dbReference>
<dbReference type="HOGENOM" id="CLU_000604_1_2_6"/>
<dbReference type="OrthoDB" id="9800654at2"/>
<dbReference type="PhylomeDB" id="Q87Z03"/>
<dbReference type="Proteomes" id="UP000002515">
    <property type="component" value="Chromosome"/>
</dbReference>
<dbReference type="GO" id="GO:0005886">
    <property type="term" value="C:plasma membrane"/>
    <property type="evidence" value="ECO:0007669"/>
    <property type="project" value="UniProtKB-SubCell"/>
</dbReference>
<dbReference type="GO" id="GO:0015439">
    <property type="term" value="F:ABC-type heme transporter activity"/>
    <property type="evidence" value="ECO:0007669"/>
    <property type="project" value="UniProtKB-EC"/>
</dbReference>
<dbReference type="GO" id="GO:0005524">
    <property type="term" value="F:ATP binding"/>
    <property type="evidence" value="ECO:0007669"/>
    <property type="project" value="UniProtKB-KW"/>
</dbReference>
<dbReference type="GO" id="GO:0016887">
    <property type="term" value="F:ATP hydrolysis activity"/>
    <property type="evidence" value="ECO:0007669"/>
    <property type="project" value="InterPro"/>
</dbReference>
<dbReference type="GO" id="GO:0017004">
    <property type="term" value="P:cytochrome complex assembly"/>
    <property type="evidence" value="ECO:0007669"/>
    <property type="project" value="UniProtKB-KW"/>
</dbReference>
<dbReference type="CDD" id="cd03231">
    <property type="entry name" value="ABC_CcmA_heme_exporter"/>
    <property type="match status" value="1"/>
</dbReference>
<dbReference type="Gene3D" id="3.40.50.300">
    <property type="entry name" value="P-loop containing nucleotide triphosphate hydrolases"/>
    <property type="match status" value="1"/>
</dbReference>
<dbReference type="InterPro" id="IPR003593">
    <property type="entry name" value="AAA+_ATPase"/>
</dbReference>
<dbReference type="InterPro" id="IPR003439">
    <property type="entry name" value="ABC_transporter-like_ATP-bd"/>
</dbReference>
<dbReference type="InterPro" id="IPR005895">
    <property type="entry name" value="ABC_transptr_haem_export_CcmA"/>
</dbReference>
<dbReference type="InterPro" id="IPR027417">
    <property type="entry name" value="P-loop_NTPase"/>
</dbReference>
<dbReference type="NCBIfam" id="TIGR01189">
    <property type="entry name" value="ccmA"/>
    <property type="match status" value="1"/>
</dbReference>
<dbReference type="NCBIfam" id="NF010061">
    <property type="entry name" value="PRK13538.1"/>
    <property type="match status" value="1"/>
</dbReference>
<dbReference type="PANTHER" id="PTHR43499">
    <property type="entry name" value="ABC TRANSPORTER I FAMILY MEMBER 1"/>
    <property type="match status" value="1"/>
</dbReference>
<dbReference type="PANTHER" id="PTHR43499:SF1">
    <property type="entry name" value="ABC TRANSPORTER I FAMILY MEMBER 1"/>
    <property type="match status" value="1"/>
</dbReference>
<dbReference type="Pfam" id="PF00005">
    <property type="entry name" value="ABC_tran"/>
    <property type="match status" value="1"/>
</dbReference>
<dbReference type="SMART" id="SM00382">
    <property type="entry name" value="AAA"/>
    <property type="match status" value="1"/>
</dbReference>
<dbReference type="SUPFAM" id="SSF52540">
    <property type="entry name" value="P-loop containing nucleoside triphosphate hydrolases"/>
    <property type="match status" value="1"/>
</dbReference>
<dbReference type="PROSITE" id="PS50893">
    <property type="entry name" value="ABC_TRANSPORTER_2"/>
    <property type="match status" value="1"/>
</dbReference>
<dbReference type="PROSITE" id="PS51243">
    <property type="entry name" value="CCMA"/>
    <property type="match status" value="1"/>
</dbReference>
<accession>Q87Z03</accession>
<comment type="function">
    <text evidence="1">Part of the ABC transporter complex CcmAB involved in the biogenesis of c-type cytochromes; once thought to export heme, this seems not to be the case, but its exact role is uncertain. Responsible for energy coupling to the transport system.</text>
</comment>
<comment type="catalytic activity">
    <reaction evidence="1">
        <text>heme b(in) + ATP + H2O = heme b(out) + ADP + phosphate + H(+)</text>
        <dbReference type="Rhea" id="RHEA:19261"/>
        <dbReference type="ChEBI" id="CHEBI:15377"/>
        <dbReference type="ChEBI" id="CHEBI:15378"/>
        <dbReference type="ChEBI" id="CHEBI:30616"/>
        <dbReference type="ChEBI" id="CHEBI:43474"/>
        <dbReference type="ChEBI" id="CHEBI:60344"/>
        <dbReference type="ChEBI" id="CHEBI:456216"/>
        <dbReference type="EC" id="7.6.2.5"/>
    </reaction>
</comment>
<comment type="subunit">
    <text evidence="1">The complex is composed of two ATP-binding proteins (CcmA) and two transmembrane proteins (CcmB).</text>
</comment>
<comment type="subcellular location">
    <subcellularLocation>
        <location evidence="1">Cell inner membrane</location>
        <topology evidence="1">Peripheral membrane protein</topology>
    </subcellularLocation>
</comment>
<comment type="similarity">
    <text evidence="1">Belongs to the ABC transporter superfamily. CcmA exporter (TC 3.A.1.107) family.</text>
</comment>